<evidence type="ECO:0000250" key="1"/>
<evidence type="ECO:0000269" key="2">
    <source>
    </source>
</evidence>
<evidence type="ECO:0000303" key="3">
    <source>
    </source>
</evidence>
<evidence type="ECO:0000305" key="4"/>
<name>FAPD_HALH5</name>
<organism>
    <name type="scientific">Halalkalibacterium halodurans (strain ATCC BAA-125 / DSM 18197 / FERM 7344 / JCM 9153 / C-125)</name>
    <name type="common">Bacillus halodurans</name>
    <dbReference type="NCBI Taxonomy" id="272558"/>
    <lineage>
        <taxon>Bacteria</taxon>
        <taxon>Bacillati</taxon>
        <taxon>Bacillota</taxon>
        <taxon>Bacilli</taxon>
        <taxon>Bacillales</taxon>
        <taxon>Bacillaceae</taxon>
        <taxon>Halalkalibacterium (ex Joshi et al. 2022)</taxon>
    </lineage>
</organism>
<dbReference type="EC" id="3.5.1.-" evidence="2"/>
<dbReference type="EMBL" id="BA000004">
    <property type="protein sequence ID" value="BAB06397.1"/>
    <property type="molecule type" value="Genomic_DNA"/>
</dbReference>
<dbReference type="PIR" id="F83984">
    <property type="entry name" value="F83984"/>
</dbReference>
<dbReference type="RefSeq" id="WP_010898827.1">
    <property type="nucleotide sequence ID" value="NC_002570.2"/>
</dbReference>
<dbReference type="SMR" id="Q9K9G9"/>
<dbReference type="STRING" id="272558.gene:10728576"/>
<dbReference type="KEGG" id="bha:BH2678"/>
<dbReference type="eggNOG" id="COG0624">
    <property type="taxonomic scope" value="Bacteria"/>
</dbReference>
<dbReference type="HOGENOM" id="CLU_021802_0_2_9"/>
<dbReference type="OrthoDB" id="9792335at2"/>
<dbReference type="BioCyc" id="MetaCyc:MONOMER-16806"/>
<dbReference type="UniPathway" id="UPA00060"/>
<dbReference type="Proteomes" id="UP000001258">
    <property type="component" value="Chromosome"/>
</dbReference>
<dbReference type="GO" id="GO:0016787">
    <property type="term" value="F:hydrolase activity"/>
    <property type="evidence" value="ECO:0007669"/>
    <property type="project" value="UniProtKB-KW"/>
</dbReference>
<dbReference type="GO" id="GO:0046872">
    <property type="term" value="F:metal ion binding"/>
    <property type="evidence" value="ECO:0007669"/>
    <property type="project" value="UniProtKB-KW"/>
</dbReference>
<dbReference type="GO" id="GO:0009228">
    <property type="term" value="P:thiamine biosynthetic process"/>
    <property type="evidence" value="ECO:0007669"/>
    <property type="project" value="UniProtKB-KW"/>
</dbReference>
<dbReference type="GO" id="GO:0009229">
    <property type="term" value="P:thiamine diphosphate biosynthetic process"/>
    <property type="evidence" value="ECO:0007669"/>
    <property type="project" value="UniProtKB-UniPathway"/>
</dbReference>
<dbReference type="Gene3D" id="3.30.70.360">
    <property type="match status" value="1"/>
</dbReference>
<dbReference type="Gene3D" id="3.40.630.10">
    <property type="entry name" value="Zn peptidases"/>
    <property type="match status" value="2"/>
</dbReference>
<dbReference type="InterPro" id="IPR010182">
    <property type="entry name" value="ArgE/DapE"/>
</dbReference>
<dbReference type="InterPro" id="IPR036264">
    <property type="entry name" value="Bact_exopeptidase_dim_dom"/>
</dbReference>
<dbReference type="InterPro" id="IPR002933">
    <property type="entry name" value="Peptidase_M20"/>
</dbReference>
<dbReference type="InterPro" id="IPR011650">
    <property type="entry name" value="Peptidase_M20_dimer"/>
</dbReference>
<dbReference type="InterPro" id="IPR050072">
    <property type="entry name" value="Peptidase_M20A"/>
</dbReference>
<dbReference type="NCBIfam" id="TIGR01910">
    <property type="entry name" value="DapE-ArgE"/>
    <property type="match status" value="1"/>
</dbReference>
<dbReference type="NCBIfam" id="NF006370">
    <property type="entry name" value="PRK08596.1"/>
    <property type="match status" value="1"/>
</dbReference>
<dbReference type="PANTHER" id="PTHR43808">
    <property type="entry name" value="ACETYLORNITHINE DEACETYLASE"/>
    <property type="match status" value="1"/>
</dbReference>
<dbReference type="PANTHER" id="PTHR43808:SF24">
    <property type="entry name" value="N-FORMYL-4-AMINO-5-AMINOMETHYL-2-METHYLPYRIMIDINE DEFORMYLASE"/>
    <property type="match status" value="1"/>
</dbReference>
<dbReference type="Pfam" id="PF07687">
    <property type="entry name" value="M20_dimer"/>
    <property type="match status" value="1"/>
</dbReference>
<dbReference type="Pfam" id="PF01546">
    <property type="entry name" value="Peptidase_M20"/>
    <property type="match status" value="1"/>
</dbReference>
<dbReference type="SUPFAM" id="SSF55031">
    <property type="entry name" value="Bacterial exopeptidase dimerisation domain"/>
    <property type="match status" value="1"/>
</dbReference>
<dbReference type="SUPFAM" id="SSF53187">
    <property type="entry name" value="Zn-dependent exopeptidases"/>
    <property type="match status" value="1"/>
</dbReference>
<protein>
    <recommendedName>
        <fullName>N-formyl-4-amino-5-aminomethyl-2-methylpyrimidine deformylase</fullName>
        <shortName evidence="3">Formylaminopyrimidine deformylase</shortName>
        <ecNumber evidence="2">3.5.1.-</ecNumber>
    </recommendedName>
    <alternativeName>
        <fullName evidence="3">Amidohydrolase YlmB</fullName>
    </alternativeName>
</protein>
<comment type="function">
    <text evidence="2">Catalyzes the deformylation of the formylaminopyrimidine N-formyl-4-amino-5-aminomethyl-2-methylpyrimidine (FAMP) to give the corresponding aminopyrimidine.</text>
</comment>
<comment type="catalytic activity">
    <reaction evidence="2">
        <text>N-formyl-4-amino-5-aminomethyl-2-methylpyrimidine + H2O = 4-amino-5-aminomethyl-2-methylpyrimidine + formate</text>
        <dbReference type="Rhea" id="RHEA:46212"/>
        <dbReference type="ChEBI" id="CHEBI:15377"/>
        <dbReference type="ChEBI" id="CHEBI:15740"/>
        <dbReference type="ChEBI" id="CHEBI:63416"/>
        <dbReference type="ChEBI" id="CHEBI:85895"/>
    </reaction>
</comment>
<comment type="cofactor">
    <cofactor evidence="1">
        <name>Zn(2+)</name>
        <dbReference type="ChEBI" id="CHEBI:29105"/>
    </cofactor>
    <cofactor evidence="1">
        <name>Co(2+)</name>
        <dbReference type="ChEBI" id="CHEBI:48828"/>
    </cofactor>
    <text evidence="1">Binds 2 Zn(2+) or Co(2+) ions per subunit.</text>
</comment>
<comment type="biophysicochemical properties">
    <kinetics>
        <KM evidence="2">5 uM for N-formyl-4-amino-5-aminomethyl-2-methylpyrimidine</KM>
        <text evidence="2">kcat is 14 min(-1).</text>
    </kinetics>
</comment>
<comment type="pathway">
    <text evidence="2">Cofactor biosynthesis; thiamine diphosphate biosynthesis.</text>
</comment>
<comment type="similarity">
    <text evidence="4">Belongs to the peptidase M20A family.</text>
</comment>
<reference key="1">
    <citation type="journal article" date="2000" name="Nucleic Acids Res.">
        <title>Complete genome sequence of the alkaliphilic bacterium Bacillus halodurans and genomic sequence comparison with Bacillus subtilis.</title>
        <authorList>
            <person name="Takami H."/>
            <person name="Nakasone K."/>
            <person name="Takaki Y."/>
            <person name="Maeno G."/>
            <person name="Sasaki R."/>
            <person name="Masui N."/>
            <person name="Fuji F."/>
            <person name="Hirama C."/>
            <person name="Nakamura Y."/>
            <person name="Ogasawara N."/>
            <person name="Kuhara S."/>
            <person name="Horikoshi K."/>
        </authorList>
    </citation>
    <scope>NUCLEOTIDE SEQUENCE [LARGE SCALE GENOMIC DNA]</scope>
    <source>
        <strain>ATCC BAA-125 / DSM 18197 / FERM 7344 / JCM 9153 / C-125</strain>
    </source>
</reference>
<reference key="2">
    <citation type="journal article" date="2007" name="Nat. Chem. Biol.">
        <title>A new thiamin salvage pathway.</title>
        <authorList>
            <person name="Jenkins A.H."/>
            <person name="Schyns G."/>
            <person name="Potot S."/>
            <person name="Sun G."/>
            <person name="Begley T.P."/>
        </authorList>
    </citation>
    <scope>FUNCTION</scope>
    <scope>CATALYTIC ACTIVITY</scope>
    <scope>BIOPHYSICOCHEMICAL PROPERTIES</scope>
    <scope>PATHWAY</scope>
</reference>
<proteinExistence type="evidence at protein level"/>
<keyword id="KW-0170">Cobalt</keyword>
<keyword id="KW-0378">Hydrolase</keyword>
<keyword id="KW-0479">Metal-binding</keyword>
<keyword id="KW-1185">Reference proteome</keyword>
<keyword id="KW-0784">Thiamine biosynthesis</keyword>
<keyword id="KW-0862">Zinc</keyword>
<sequence length="427" mass="47340">MFKLSVIEELLAHVDKNKEELLALVQTLVAYPTPSPPARNTADAQQYIRTYCEKLGCNVDMWDVYPNDPNVVAVLKGTYSESYRSLILNGHIDVAAVDESEEWKTPPFEATVNQGVIRGRGVADMKGGLAACLFAMKTLHAFNIQLPGDLIFQSVVGEEVGEAGTKSCCERGYTADLAIVSDTSHCEIQGQGGVITGWITVKSPVTFHDGTRRNLIHAGGGEFGASAIEKMMKLIQGLQELERHWAVTKSSPGFPPGMNTINPAFIEGGRHPAFIADECKLWITIHYYPHESYEEIVREVEEHLLHVAKADPWMREHPPSFSWGGTSMIEDKGEIFPAFQIDEQSDAVQLLKKIHYHLTGEEVKTSMSQTVTDGGWLAEAGIPTLLFGPGKLEDAHSVNEELEIAELVQYTKTLLTFIYEWCHLRKA</sequence>
<gene>
    <name evidence="3" type="primary">ylmB</name>
    <name type="ordered locus">BH2678</name>
</gene>
<feature type="chain" id="PRO_0000387966" description="N-formyl-4-amino-5-aminomethyl-2-methylpyrimidine deformylase">
    <location>
        <begin position="1"/>
        <end position="427"/>
    </location>
</feature>
<feature type="active site" evidence="1">
    <location>
        <position position="93"/>
    </location>
</feature>
<feature type="active site" description="Proton acceptor" evidence="1">
    <location>
        <position position="158"/>
    </location>
</feature>
<feature type="binding site" evidence="1">
    <location>
        <position position="91"/>
    </location>
    <ligand>
        <name>Zn(2+)</name>
        <dbReference type="ChEBI" id="CHEBI:29105"/>
        <label>1</label>
    </ligand>
</feature>
<feature type="binding site" evidence="1">
    <location>
        <position position="124"/>
    </location>
    <ligand>
        <name>Zn(2+)</name>
        <dbReference type="ChEBI" id="CHEBI:29105"/>
        <label>1</label>
    </ligand>
</feature>
<feature type="binding site" evidence="1">
    <location>
        <position position="124"/>
    </location>
    <ligand>
        <name>Zn(2+)</name>
        <dbReference type="ChEBI" id="CHEBI:29105"/>
        <label>2</label>
    </ligand>
</feature>
<feature type="binding site" evidence="1">
    <location>
        <position position="159"/>
    </location>
    <ligand>
        <name>Zn(2+)</name>
        <dbReference type="ChEBI" id="CHEBI:29105"/>
        <label>2</label>
    </ligand>
</feature>
<feature type="binding site" evidence="1">
    <location>
        <position position="182"/>
    </location>
    <ligand>
        <name>Zn(2+)</name>
        <dbReference type="ChEBI" id="CHEBI:29105"/>
        <label>1</label>
    </ligand>
</feature>
<feature type="binding site" evidence="1">
    <location>
        <position position="396"/>
    </location>
    <ligand>
        <name>Zn(2+)</name>
        <dbReference type="ChEBI" id="CHEBI:29105"/>
        <label>2</label>
    </ligand>
</feature>
<accession>Q9K9G9</accession>